<comment type="subcellular location">
    <subcellularLocation>
        <location evidence="2">Cytoplasm</location>
    </subcellularLocation>
    <subcellularLocation>
        <location evidence="2">Nucleus</location>
    </subcellularLocation>
</comment>
<keyword id="KW-0963">Cytoplasm</keyword>
<keyword id="KW-0539">Nucleus</keyword>
<keyword id="KW-1185">Reference proteome</keyword>
<evidence type="ECO:0000256" key="1">
    <source>
        <dbReference type="SAM" id="MobiDB-lite"/>
    </source>
</evidence>
<evidence type="ECO:0000269" key="2">
    <source>
    </source>
</evidence>
<name>YOX2_SCHPO</name>
<reference key="1">
    <citation type="journal article" date="2002" name="Nature">
        <title>The genome sequence of Schizosaccharomyces pombe.</title>
        <authorList>
            <person name="Wood V."/>
            <person name="Gwilliam R."/>
            <person name="Rajandream M.A."/>
            <person name="Lyne M.H."/>
            <person name="Lyne R."/>
            <person name="Stewart A."/>
            <person name="Sgouros J.G."/>
            <person name="Peat N."/>
            <person name="Hayles J."/>
            <person name="Baker S.G."/>
            <person name="Basham D."/>
            <person name="Bowman S."/>
            <person name="Brooks K."/>
            <person name="Brown D."/>
            <person name="Brown S."/>
            <person name="Chillingworth T."/>
            <person name="Churcher C.M."/>
            <person name="Collins M."/>
            <person name="Connor R."/>
            <person name="Cronin A."/>
            <person name="Davis P."/>
            <person name="Feltwell T."/>
            <person name="Fraser A."/>
            <person name="Gentles S."/>
            <person name="Goble A."/>
            <person name="Hamlin N."/>
            <person name="Harris D.E."/>
            <person name="Hidalgo J."/>
            <person name="Hodgson G."/>
            <person name="Holroyd S."/>
            <person name="Hornsby T."/>
            <person name="Howarth S."/>
            <person name="Huckle E.J."/>
            <person name="Hunt S."/>
            <person name="Jagels K."/>
            <person name="James K.D."/>
            <person name="Jones L."/>
            <person name="Jones M."/>
            <person name="Leather S."/>
            <person name="McDonald S."/>
            <person name="McLean J."/>
            <person name="Mooney P."/>
            <person name="Moule S."/>
            <person name="Mungall K.L."/>
            <person name="Murphy L.D."/>
            <person name="Niblett D."/>
            <person name="Odell C."/>
            <person name="Oliver K."/>
            <person name="O'Neil S."/>
            <person name="Pearson D."/>
            <person name="Quail M.A."/>
            <person name="Rabbinowitsch E."/>
            <person name="Rutherford K.M."/>
            <person name="Rutter S."/>
            <person name="Saunders D."/>
            <person name="Seeger K."/>
            <person name="Sharp S."/>
            <person name="Skelton J."/>
            <person name="Simmonds M.N."/>
            <person name="Squares R."/>
            <person name="Squares S."/>
            <person name="Stevens K."/>
            <person name="Taylor K."/>
            <person name="Taylor R.G."/>
            <person name="Tivey A."/>
            <person name="Walsh S.V."/>
            <person name="Warren T."/>
            <person name="Whitehead S."/>
            <person name="Woodward J.R."/>
            <person name="Volckaert G."/>
            <person name="Aert R."/>
            <person name="Robben J."/>
            <person name="Grymonprez B."/>
            <person name="Weltjens I."/>
            <person name="Vanstreels E."/>
            <person name="Rieger M."/>
            <person name="Schaefer M."/>
            <person name="Mueller-Auer S."/>
            <person name="Gabel C."/>
            <person name="Fuchs M."/>
            <person name="Duesterhoeft A."/>
            <person name="Fritzc C."/>
            <person name="Holzer E."/>
            <person name="Moestl D."/>
            <person name="Hilbert H."/>
            <person name="Borzym K."/>
            <person name="Langer I."/>
            <person name="Beck A."/>
            <person name="Lehrach H."/>
            <person name="Reinhardt R."/>
            <person name="Pohl T.M."/>
            <person name="Eger P."/>
            <person name="Zimmermann W."/>
            <person name="Wedler H."/>
            <person name="Wambutt R."/>
            <person name="Purnelle B."/>
            <person name="Goffeau A."/>
            <person name="Cadieu E."/>
            <person name="Dreano S."/>
            <person name="Gloux S."/>
            <person name="Lelaure V."/>
            <person name="Mottier S."/>
            <person name="Galibert F."/>
            <person name="Aves S.J."/>
            <person name="Xiang Z."/>
            <person name="Hunt C."/>
            <person name="Moore K."/>
            <person name="Hurst S.M."/>
            <person name="Lucas M."/>
            <person name="Rochet M."/>
            <person name="Gaillardin C."/>
            <person name="Tallada V.A."/>
            <person name="Garzon A."/>
            <person name="Thode G."/>
            <person name="Daga R.R."/>
            <person name="Cruzado L."/>
            <person name="Jimenez J."/>
            <person name="Sanchez M."/>
            <person name="del Rey F."/>
            <person name="Benito J."/>
            <person name="Dominguez A."/>
            <person name="Revuelta J.L."/>
            <person name="Moreno S."/>
            <person name="Armstrong J."/>
            <person name="Forsburg S.L."/>
            <person name="Cerutti L."/>
            <person name="Lowe T."/>
            <person name="McCombie W.R."/>
            <person name="Paulsen I."/>
            <person name="Potashkin J."/>
            <person name="Shpakovski G.V."/>
            <person name="Ussery D."/>
            <person name="Barrell B.G."/>
            <person name="Nurse P."/>
        </authorList>
    </citation>
    <scope>NUCLEOTIDE SEQUENCE [LARGE SCALE GENOMIC DNA]</scope>
    <source>
        <strain>972 / ATCC 24843</strain>
    </source>
</reference>
<reference key="2">
    <citation type="journal article" date="2006" name="Nat. Biotechnol.">
        <title>ORFeome cloning and global analysis of protein localization in the fission yeast Schizosaccharomyces pombe.</title>
        <authorList>
            <person name="Matsuyama A."/>
            <person name="Arai R."/>
            <person name="Yashiroda Y."/>
            <person name="Shirai A."/>
            <person name="Kamata A."/>
            <person name="Sekido S."/>
            <person name="Kobayashi Y."/>
            <person name="Hashimoto A."/>
            <person name="Hamamoto M."/>
            <person name="Hiraoka Y."/>
            <person name="Horinouchi S."/>
            <person name="Yoshida M."/>
        </authorList>
    </citation>
    <scope>SUBCELLULAR LOCATION [LARGE SCALE ANALYSIS]</scope>
</reference>
<protein>
    <recommendedName>
        <fullName>Uncharacterized protein C14F5.02</fullName>
    </recommendedName>
</protein>
<proteinExistence type="predicted"/>
<gene>
    <name type="ORF">SPBC14F5.02</name>
</gene>
<organism>
    <name type="scientific">Schizosaccharomyces pombe (strain 972 / ATCC 24843)</name>
    <name type="common">Fission yeast</name>
    <dbReference type="NCBI Taxonomy" id="284812"/>
    <lineage>
        <taxon>Eukaryota</taxon>
        <taxon>Fungi</taxon>
        <taxon>Dikarya</taxon>
        <taxon>Ascomycota</taxon>
        <taxon>Taphrinomycotina</taxon>
        <taxon>Schizosaccharomycetes</taxon>
        <taxon>Schizosaccharomycetales</taxon>
        <taxon>Schizosaccharomycetaceae</taxon>
        <taxon>Schizosaccharomyces</taxon>
    </lineage>
</organism>
<sequence length="515" mass="57939">MRNLNTELDFFVSFSALKEENISQLKVYWAQSNLVELYYGESFYINIVCSRPIVDENVTTWPENEGFRIEGTLLESLVESVTSASNYPKVNAFSLMCSGIPSFIWVEDDKQYALWACLAQLDSYSYPNHKLEIHVYKHILPDLPQSSEVDRNSETEGTREENSNTSDWDEQNEYVSEVEGDYNLLGSLSNDIQFRSNPPVISGAYVFGESDVANELKDPSRKTKTRKKVFECSVPVVLKLRSYALNESNQYITSIVSPDSSCENIRILGFKAETNAATISLFAPKTPEKLQITLSSSDVFTIIHLLQIPDNIKHIELQCFCKVIVAQKLSETLVESMPFTYKHPPVLITRRTPTKTHTKQLSSSGNVSAAQSISSLNLLEISASSPSYVPSGSSFSVRANLYNPLDFSIDLLIRIPLYCYDDCLTNKEHSTSKSEEKSSELLKYPNGHTISPGIIALSTKLYTGSIFPKCEKDFDLHFLAYKPGSYDLSSISIEDVNHVVHKPRKLSKELQIIVT</sequence>
<dbReference type="EMBL" id="CU329671">
    <property type="protein sequence ID" value="CAA19320.1"/>
    <property type="molecule type" value="Genomic_DNA"/>
</dbReference>
<dbReference type="PIR" id="T39448">
    <property type="entry name" value="T39448"/>
</dbReference>
<dbReference type="FunCoup" id="O60099">
    <property type="interactions" value="34"/>
</dbReference>
<dbReference type="STRING" id="284812.O60099"/>
<dbReference type="iPTMnet" id="O60099"/>
<dbReference type="PaxDb" id="4896-SPBC14F5.02.1"/>
<dbReference type="EnsemblFungi" id="SPBC14F5.02.1">
    <property type="protein sequence ID" value="SPBC14F5.02.1:pep"/>
    <property type="gene ID" value="SPBC14F5.02"/>
</dbReference>
<dbReference type="KEGG" id="spo:2539755"/>
<dbReference type="PomBase" id="SPBC14F5.02"/>
<dbReference type="VEuPathDB" id="FungiDB:SPBC14F5.02"/>
<dbReference type="HOGENOM" id="CLU_529092_0_0_1"/>
<dbReference type="InParanoid" id="O60099"/>
<dbReference type="OMA" id="PKCEKDF"/>
<dbReference type="PRO" id="PR:O60099"/>
<dbReference type="Proteomes" id="UP000002485">
    <property type="component" value="Chromosome II"/>
</dbReference>
<dbReference type="GO" id="GO:0005829">
    <property type="term" value="C:cytosol"/>
    <property type="evidence" value="ECO:0007005"/>
    <property type="project" value="PomBase"/>
</dbReference>
<dbReference type="GO" id="GO:0005634">
    <property type="term" value="C:nucleus"/>
    <property type="evidence" value="ECO:0007005"/>
    <property type="project" value="PomBase"/>
</dbReference>
<dbReference type="GO" id="GO:0005802">
    <property type="term" value="C:trans-Golgi network"/>
    <property type="evidence" value="ECO:0000318"/>
    <property type="project" value="GO_Central"/>
</dbReference>
<dbReference type="GO" id="GO:1990071">
    <property type="term" value="C:TRAPPII protein complex"/>
    <property type="evidence" value="ECO:0000318"/>
    <property type="project" value="GO_Central"/>
</dbReference>
<dbReference type="GO" id="GO:0006891">
    <property type="term" value="P:intra-Golgi vesicle-mediated transport"/>
    <property type="evidence" value="ECO:0000318"/>
    <property type="project" value="GO_Central"/>
</dbReference>
<dbReference type="InterPro" id="IPR024662">
    <property type="entry name" value="Trs65"/>
</dbReference>
<dbReference type="PANTHER" id="PTHR28159">
    <property type="entry name" value="TRAFFICKING PROTEIN PARTICLE COMPLEX II-SPECIFIC SUBUNIT 65"/>
    <property type="match status" value="1"/>
</dbReference>
<dbReference type="PANTHER" id="PTHR28159:SF1">
    <property type="entry name" value="TRAFFICKING PROTEIN PARTICLE COMPLEX II-SPECIFIC SUBUNIT 65"/>
    <property type="match status" value="1"/>
</dbReference>
<accession>O60099</accession>
<feature type="chain" id="PRO_0000304064" description="Uncharacterized protein C14F5.02">
    <location>
        <begin position="1"/>
        <end position="515"/>
    </location>
</feature>
<feature type="region of interest" description="Disordered" evidence="1">
    <location>
        <begin position="146"/>
        <end position="171"/>
    </location>
</feature>
<feature type="compositionally biased region" description="Basic and acidic residues" evidence="1">
    <location>
        <begin position="148"/>
        <end position="162"/>
    </location>
</feature>